<organism>
    <name type="scientific">Amoebophilus asiaticus (strain 5a2)</name>
    <dbReference type="NCBI Taxonomy" id="452471"/>
    <lineage>
        <taxon>Bacteria</taxon>
        <taxon>Pseudomonadati</taxon>
        <taxon>Bacteroidota</taxon>
        <taxon>Cytophagia</taxon>
        <taxon>Cytophagales</taxon>
        <taxon>Amoebophilaceae</taxon>
        <taxon>Candidatus Amoebophilus</taxon>
    </lineage>
</organism>
<dbReference type="EC" id="2.7.7.8" evidence="1"/>
<dbReference type="EMBL" id="CP001102">
    <property type="protein sequence ID" value="ACE05470.1"/>
    <property type="molecule type" value="Genomic_DNA"/>
</dbReference>
<dbReference type="RefSeq" id="WP_012472242.1">
    <property type="nucleotide sequence ID" value="NC_010830.1"/>
</dbReference>
<dbReference type="SMR" id="B3EU51"/>
<dbReference type="STRING" id="452471.Aasi_0013"/>
<dbReference type="KEGG" id="aas:Aasi_0013"/>
<dbReference type="eggNOG" id="COG1185">
    <property type="taxonomic scope" value="Bacteria"/>
</dbReference>
<dbReference type="HOGENOM" id="CLU_004217_2_2_10"/>
<dbReference type="OrthoDB" id="9804305at2"/>
<dbReference type="Proteomes" id="UP000001227">
    <property type="component" value="Chromosome"/>
</dbReference>
<dbReference type="GO" id="GO:0005829">
    <property type="term" value="C:cytosol"/>
    <property type="evidence" value="ECO:0007669"/>
    <property type="project" value="TreeGrafter"/>
</dbReference>
<dbReference type="GO" id="GO:0000175">
    <property type="term" value="F:3'-5'-RNA exonuclease activity"/>
    <property type="evidence" value="ECO:0007669"/>
    <property type="project" value="TreeGrafter"/>
</dbReference>
<dbReference type="GO" id="GO:0000287">
    <property type="term" value="F:magnesium ion binding"/>
    <property type="evidence" value="ECO:0007669"/>
    <property type="project" value="UniProtKB-UniRule"/>
</dbReference>
<dbReference type="GO" id="GO:0004654">
    <property type="term" value="F:polyribonucleotide nucleotidyltransferase activity"/>
    <property type="evidence" value="ECO:0007669"/>
    <property type="project" value="UniProtKB-UniRule"/>
</dbReference>
<dbReference type="GO" id="GO:0003723">
    <property type="term" value="F:RNA binding"/>
    <property type="evidence" value="ECO:0007669"/>
    <property type="project" value="UniProtKB-UniRule"/>
</dbReference>
<dbReference type="GO" id="GO:0006402">
    <property type="term" value="P:mRNA catabolic process"/>
    <property type="evidence" value="ECO:0007669"/>
    <property type="project" value="UniProtKB-UniRule"/>
</dbReference>
<dbReference type="GO" id="GO:0006396">
    <property type="term" value="P:RNA processing"/>
    <property type="evidence" value="ECO:0007669"/>
    <property type="project" value="InterPro"/>
</dbReference>
<dbReference type="CDD" id="cd02393">
    <property type="entry name" value="KH-I_PNPase"/>
    <property type="match status" value="1"/>
</dbReference>
<dbReference type="CDD" id="cd11363">
    <property type="entry name" value="RNase_PH_PNPase_1"/>
    <property type="match status" value="1"/>
</dbReference>
<dbReference type="CDD" id="cd11364">
    <property type="entry name" value="RNase_PH_PNPase_2"/>
    <property type="match status" value="1"/>
</dbReference>
<dbReference type="CDD" id="cd04472">
    <property type="entry name" value="S1_PNPase"/>
    <property type="match status" value="1"/>
</dbReference>
<dbReference type="FunFam" id="3.30.1370.10:FF:000001">
    <property type="entry name" value="Polyribonucleotide nucleotidyltransferase"/>
    <property type="match status" value="1"/>
</dbReference>
<dbReference type="FunFam" id="3.30.230.70:FF:000001">
    <property type="entry name" value="Polyribonucleotide nucleotidyltransferase"/>
    <property type="match status" value="1"/>
</dbReference>
<dbReference type="FunFam" id="3.30.230.70:FF:000002">
    <property type="entry name" value="Polyribonucleotide nucleotidyltransferase"/>
    <property type="match status" value="1"/>
</dbReference>
<dbReference type="FunFam" id="2.40.50.140:FF:000189">
    <property type="entry name" value="Polyribonucleotide nucleotidyltransferase, putative"/>
    <property type="match status" value="1"/>
</dbReference>
<dbReference type="Gene3D" id="3.30.230.70">
    <property type="entry name" value="GHMP Kinase, N-terminal domain"/>
    <property type="match status" value="2"/>
</dbReference>
<dbReference type="Gene3D" id="3.30.1370.10">
    <property type="entry name" value="K Homology domain, type 1"/>
    <property type="match status" value="1"/>
</dbReference>
<dbReference type="Gene3D" id="2.40.50.140">
    <property type="entry name" value="Nucleic acid-binding proteins"/>
    <property type="match status" value="1"/>
</dbReference>
<dbReference type="HAMAP" id="MF_01595">
    <property type="entry name" value="PNPase"/>
    <property type="match status" value="1"/>
</dbReference>
<dbReference type="InterPro" id="IPR001247">
    <property type="entry name" value="ExoRNase_PH_dom1"/>
</dbReference>
<dbReference type="InterPro" id="IPR015847">
    <property type="entry name" value="ExoRNase_PH_dom2"/>
</dbReference>
<dbReference type="InterPro" id="IPR036345">
    <property type="entry name" value="ExoRNase_PH_dom2_sf"/>
</dbReference>
<dbReference type="InterPro" id="IPR004087">
    <property type="entry name" value="KH_dom"/>
</dbReference>
<dbReference type="InterPro" id="IPR004088">
    <property type="entry name" value="KH_dom_type_1"/>
</dbReference>
<dbReference type="InterPro" id="IPR036612">
    <property type="entry name" value="KH_dom_type_1_sf"/>
</dbReference>
<dbReference type="InterPro" id="IPR012340">
    <property type="entry name" value="NA-bd_OB-fold"/>
</dbReference>
<dbReference type="InterPro" id="IPR012162">
    <property type="entry name" value="PNPase"/>
</dbReference>
<dbReference type="InterPro" id="IPR027408">
    <property type="entry name" value="PNPase/RNase_PH_dom_sf"/>
</dbReference>
<dbReference type="InterPro" id="IPR015848">
    <property type="entry name" value="PNPase_PH_RNA-bd_bac/org-type"/>
</dbReference>
<dbReference type="InterPro" id="IPR036456">
    <property type="entry name" value="PNPase_PH_RNA-bd_sf"/>
</dbReference>
<dbReference type="InterPro" id="IPR020568">
    <property type="entry name" value="Ribosomal_Su5_D2-typ_SF"/>
</dbReference>
<dbReference type="InterPro" id="IPR003029">
    <property type="entry name" value="S1_domain"/>
</dbReference>
<dbReference type="NCBIfam" id="TIGR03591">
    <property type="entry name" value="polynuc_phos"/>
    <property type="match status" value="1"/>
</dbReference>
<dbReference type="NCBIfam" id="NF008805">
    <property type="entry name" value="PRK11824.1"/>
    <property type="match status" value="1"/>
</dbReference>
<dbReference type="PANTHER" id="PTHR11252">
    <property type="entry name" value="POLYRIBONUCLEOTIDE NUCLEOTIDYLTRANSFERASE"/>
    <property type="match status" value="1"/>
</dbReference>
<dbReference type="PANTHER" id="PTHR11252:SF0">
    <property type="entry name" value="POLYRIBONUCLEOTIDE NUCLEOTIDYLTRANSFERASE 1, MITOCHONDRIAL"/>
    <property type="match status" value="1"/>
</dbReference>
<dbReference type="Pfam" id="PF00013">
    <property type="entry name" value="KH_1"/>
    <property type="match status" value="1"/>
</dbReference>
<dbReference type="Pfam" id="PF03726">
    <property type="entry name" value="PNPase"/>
    <property type="match status" value="1"/>
</dbReference>
<dbReference type="Pfam" id="PF01138">
    <property type="entry name" value="RNase_PH"/>
    <property type="match status" value="2"/>
</dbReference>
<dbReference type="Pfam" id="PF03725">
    <property type="entry name" value="RNase_PH_C"/>
    <property type="match status" value="2"/>
</dbReference>
<dbReference type="Pfam" id="PF00575">
    <property type="entry name" value="S1"/>
    <property type="match status" value="1"/>
</dbReference>
<dbReference type="PIRSF" id="PIRSF005499">
    <property type="entry name" value="PNPase"/>
    <property type="match status" value="1"/>
</dbReference>
<dbReference type="SMART" id="SM00322">
    <property type="entry name" value="KH"/>
    <property type="match status" value="1"/>
</dbReference>
<dbReference type="SMART" id="SM00316">
    <property type="entry name" value="S1"/>
    <property type="match status" value="1"/>
</dbReference>
<dbReference type="SUPFAM" id="SSF54791">
    <property type="entry name" value="Eukaryotic type KH-domain (KH-domain type I)"/>
    <property type="match status" value="1"/>
</dbReference>
<dbReference type="SUPFAM" id="SSF50249">
    <property type="entry name" value="Nucleic acid-binding proteins"/>
    <property type="match status" value="1"/>
</dbReference>
<dbReference type="SUPFAM" id="SSF46915">
    <property type="entry name" value="Polynucleotide phosphorylase/guanosine pentaphosphate synthase (PNPase/GPSI), domain 3"/>
    <property type="match status" value="1"/>
</dbReference>
<dbReference type="SUPFAM" id="SSF55666">
    <property type="entry name" value="Ribonuclease PH domain 2-like"/>
    <property type="match status" value="2"/>
</dbReference>
<dbReference type="SUPFAM" id="SSF54211">
    <property type="entry name" value="Ribosomal protein S5 domain 2-like"/>
    <property type="match status" value="2"/>
</dbReference>
<dbReference type="PROSITE" id="PS50084">
    <property type="entry name" value="KH_TYPE_1"/>
    <property type="match status" value="1"/>
</dbReference>
<dbReference type="PROSITE" id="PS50126">
    <property type="entry name" value="S1"/>
    <property type="match status" value="1"/>
</dbReference>
<gene>
    <name evidence="1" type="primary">pnp</name>
    <name type="ordered locus">Aasi_0013</name>
</gene>
<comment type="function">
    <text evidence="1">Involved in mRNA degradation. Catalyzes the phosphorolysis of single-stranded polyribonucleotides processively in the 3'- to 5'-direction.</text>
</comment>
<comment type="catalytic activity">
    <reaction evidence="1">
        <text>RNA(n+1) + phosphate = RNA(n) + a ribonucleoside 5'-diphosphate</text>
        <dbReference type="Rhea" id="RHEA:22096"/>
        <dbReference type="Rhea" id="RHEA-COMP:14527"/>
        <dbReference type="Rhea" id="RHEA-COMP:17342"/>
        <dbReference type="ChEBI" id="CHEBI:43474"/>
        <dbReference type="ChEBI" id="CHEBI:57930"/>
        <dbReference type="ChEBI" id="CHEBI:140395"/>
        <dbReference type="EC" id="2.7.7.8"/>
    </reaction>
</comment>
<comment type="cofactor">
    <cofactor evidence="1">
        <name>Mg(2+)</name>
        <dbReference type="ChEBI" id="CHEBI:18420"/>
    </cofactor>
</comment>
<comment type="subcellular location">
    <subcellularLocation>
        <location evidence="1">Cytoplasm</location>
    </subcellularLocation>
</comment>
<comment type="similarity">
    <text evidence="1">Belongs to the polyribonucleotide nucleotidyltransferase family.</text>
</comment>
<name>PNP_AMOA5</name>
<sequence length="713" mass="78662">MLNKIISKTISLPEHREITIETGKLAKQADGSVVVRMGDTMLLATVVFKQELDPTVDFLPLHVEYQEKFAAAGKIPGGFLRREGKLGDHEVLISRLVDRAIRPLFPDNYKHETQINIFLISADPEILPESLAGLAASAALMISPIPFEGPISEVRVARIDGQFVVNPTQSALEKADIDLMVGGSEKNILMVEGEMDEVQEADIIAAIQFAHEAIKLQCQVQKELADAVATLKFEAEPLQETENFELKDRTFKALYDKVYATAKKGITNKHLRKSSFKQIKKEYLKELLQQDPETSTVHFDKYYYELEKQVVRDLALNEGLRLDGRKLDEIRAIESEIDYLPAAHGSSLFTRGETQSLTTVTLGTKLDEQLIDRALLNGYSRFMLHYNFPSFSTGEVKFNRGPGRREIGHGHLAMRALKKVLPLDTENPYTIRIVSDILESNGSSSMATVCAGSLALMDAGISIRSAVSGIAMGLLMDEQTGKHAILSDILGDEDALGDMDFKVAGTAKGITACQMDIKVSGLTPQLLQKALEQAKAGRLHILGEMNKTITEPKTTYKKHAPSFSTMTIPKNMIGAVIGPSGKIVQEMQRETGTTIIIEEVEGKGIIKFFGPNQEAVQSAEKRVKDIVAEPVVGDVYQGTVKSIVPFGAFVEFMPGKEGLLHISEVKWERIENLDQVLELGEVIPVKLLEIDPKSGKYKLSRKVLLPNPKATEA</sequence>
<accession>B3EU51</accession>
<proteinExistence type="inferred from homology"/>
<feature type="chain" id="PRO_1000147879" description="Polyribonucleotide nucleotidyltransferase">
    <location>
        <begin position="1"/>
        <end position="713"/>
    </location>
</feature>
<feature type="domain" description="KH" evidence="1">
    <location>
        <begin position="561"/>
        <end position="623"/>
    </location>
</feature>
<feature type="domain" description="S1 motif" evidence="1">
    <location>
        <begin position="633"/>
        <end position="702"/>
    </location>
</feature>
<feature type="binding site" evidence="1">
    <location>
        <position position="494"/>
    </location>
    <ligand>
        <name>Mg(2+)</name>
        <dbReference type="ChEBI" id="CHEBI:18420"/>
    </ligand>
</feature>
<feature type="binding site" evidence="1">
    <location>
        <position position="500"/>
    </location>
    <ligand>
        <name>Mg(2+)</name>
        <dbReference type="ChEBI" id="CHEBI:18420"/>
    </ligand>
</feature>
<evidence type="ECO:0000255" key="1">
    <source>
        <dbReference type="HAMAP-Rule" id="MF_01595"/>
    </source>
</evidence>
<reference key="1">
    <citation type="journal article" date="2010" name="J. Bacteriol.">
        <title>The genome of the amoeba symbiont 'Candidatus Amoebophilus asiaticus' reveals common mechanisms for host cell interaction among amoeba-associated bacteria.</title>
        <authorList>
            <person name="Schmitz-Esser S."/>
            <person name="Tischler P."/>
            <person name="Arnold R."/>
            <person name="Montanaro J."/>
            <person name="Wagner M."/>
            <person name="Rattei T."/>
            <person name="Horn M."/>
        </authorList>
    </citation>
    <scope>NUCLEOTIDE SEQUENCE [LARGE SCALE GENOMIC DNA]</scope>
    <source>
        <strain>5a2</strain>
    </source>
</reference>
<keyword id="KW-0963">Cytoplasm</keyword>
<keyword id="KW-0460">Magnesium</keyword>
<keyword id="KW-0479">Metal-binding</keyword>
<keyword id="KW-0548">Nucleotidyltransferase</keyword>
<keyword id="KW-1185">Reference proteome</keyword>
<keyword id="KW-0694">RNA-binding</keyword>
<keyword id="KW-0808">Transferase</keyword>
<protein>
    <recommendedName>
        <fullName evidence="1">Polyribonucleotide nucleotidyltransferase</fullName>
        <ecNumber evidence="1">2.7.7.8</ecNumber>
    </recommendedName>
    <alternativeName>
        <fullName evidence="1">Polynucleotide phosphorylase</fullName>
        <shortName evidence="1">PNPase</shortName>
    </alternativeName>
</protein>